<keyword id="KW-0041">Annexin</keyword>
<keyword id="KW-0106">Calcium</keyword>
<keyword id="KW-0111">Calcium/phospholipid-binding</keyword>
<keyword id="KW-0677">Repeat</keyword>
<sequence length="323" mass="35982">MACLKGAKGTVQDAPDFNDKEDAETLRHAMKGLGTDEDTILKLLISRSNKQRQQIALTYKTLFGRDLTDDLKSELSGKFETLLVALMVPAHLYDACELRNAIKGLGTLENVIIEIMASRTAAEVKNIKETYKKEFDSDLEKDIVGDTSGNFERLLVSLVQANRDPVGKVDEGQVENDAKALFDAGENKWGTDEETFISILSTRGVGHLRKVFDQYMTISGYQIEESIQSETGGHFEKLLLAVVKSIRSIQGYLAEVLYNSMKGAGTDDQTLIRVLVSRSEIDLFNIRQTFRKHYGKSLHAMIQSDTSGDYRNALLLLCGEIDD</sequence>
<protein>
    <recommendedName>
        <fullName>Annexin A5</fullName>
    </recommendedName>
    <alternativeName>
        <fullName>Annexin V</fullName>
    </alternativeName>
    <alternativeName>
        <fullName>Annexin-5</fullName>
    </alternativeName>
</protein>
<proteinExistence type="evidence at transcript level"/>
<name>ANXA5_CYNPY</name>
<accession>P70075</accession>
<reference key="1">
    <citation type="journal article" date="1996" name="Dev. Genes Evol.">
        <title>Differential expression of annexin V during spermatogenesis in the newt Cynops pyrrhogaster.</title>
        <authorList>
            <person name="Yamamoto T."/>
            <person name="Hikono T."/>
            <person name="Abe S."/>
        </authorList>
    </citation>
    <scope>NUCLEOTIDE SEQUENCE [MRNA]</scope>
    <source>
        <tissue>Testis</tissue>
    </source>
</reference>
<evidence type="ECO:0000250" key="1"/>
<evidence type="ECO:0000255" key="2">
    <source>
        <dbReference type="PROSITE-ProRule" id="PRU01245"/>
    </source>
</evidence>
<evidence type="ECO:0000305" key="3"/>
<organism>
    <name type="scientific">Cynops pyrrhogaster</name>
    <name type="common">Japanese fire-bellied newt</name>
    <name type="synonym">Molge pyrrhogaster</name>
    <dbReference type="NCBI Taxonomy" id="8330"/>
    <lineage>
        <taxon>Eukaryota</taxon>
        <taxon>Metazoa</taxon>
        <taxon>Chordata</taxon>
        <taxon>Craniata</taxon>
        <taxon>Vertebrata</taxon>
        <taxon>Euteleostomi</taxon>
        <taxon>Amphibia</taxon>
        <taxon>Batrachia</taxon>
        <taxon>Caudata</taxon>
        <taxon>Salamandroidea</taxon>
        <taxon>Salamandridae</taxon>
        <taxon>Pleurodelinae</taxon>
        <taxon>Cynops</taxon>
    </lineage>
</organism>
<comment type="function">
    <text evidence="1">Calcium/phospholipid-binding protein which promotes membrane fusion and is involved in exocytosis.</text>
</comment>
<comment type="domain">
    <text>A pair of annexin repeats may form one binding site for calcium and phospholipid.</text>
</comment>
<comment type="similarity">
    <text evidence="2 3">Belongs to the annexin family.</text>
</comment>
<feature type="chain" id="PRO_0000067492" description="Annexin A5">
    <location>
        <begin position="1"/>
        <end position="323"/>
    </location>
</feature>
<feature type="repeat" description="Annexin 1" evidence="2">
    <location>
        <begin position="17"/>
        <end position="88"/>
    </location>
</feature>
<feature type="repeat" description="Annexin 2" evidence="2">
    <location>
        <begin position="89"/>
        <end position="160"/>
    </location>
</feature>
<feature type="repeat" description="Annexin 3" evidence="2">
    <location>
        <begin position="172"/>
        <end position="244"/>
    </location>
</feature>
<feature type="repeat" description="Annexin 4" evidence="2">
    <location>
        <begin position="248"/>
        <end position="319"/>
    </location>
</feature>
<dbReference type="EMBL" id="D64134">
    <property type="protein sequence ID" value="BAA11012.1"/>
    <property type="molecule type" value="mRNA"/>
</dbReference>
<dbReference type="SMR" id="P70075"/>
<dbReference type="GO" id="GO:0005737">
    <property type="term" value="C:cytoplasm"/>
    <property type="evidence" value="ECO:0007669"/>
    <property type="project" value="TreeGrafter"/>
</dbReference>
<dbReference type="GO" id="GO:0005634">
    <property type="term" value="C:nucleus"/>
    <property type="evidence" value="ECO:0007669"/>
    <property type="project" value="TreeGrafter"/>
</dbReference>
<dbReference type="GO" id="GO:0005886">
    <property type="term" value="C:plasma membrane"/>
    <property type="evidence" value="ECO:0007669"/>
    <property type="project" value="TreeGrafter"/>
</dbReference>
<dbReference type="GO" id="GO:0012506">
    <property type="term" value="C:vesicle membrane"/>
    <property type="evidence" value="ECO:0007669"/>
    <property type="project" value="TreeGrafter"/>
</dbReference>
<dbReference type="GO" id="GO:0005509">
    <property type="term" value="F:calcium ion binding"/>
    <property type="evidence" value="ECO:0007669"/>
    <property type="project" value="InterPro"/>
</dbReference>
<dbReference type="GO" id="GO:0005544">
    <property type="term" value="F:calcium-dependent phospholipid binding"/>
    <property type="evidence" value="ECO:0007669"/>
    <property type="project" value="UniProtKB-KW"/>
</dbReference>
<dbReference type="GO" id="GO:0001786">
    <property type="term" value="F:phosphatidylserine binding"/>
    <property type="evidence" value="ECO:0007669"/>
    <property type="project" value="TreeGrafter"/>
</dbReference>
<dbReference type="GO" id="GO:0050819">
    <property type="term" value="P:negative regulation of coagulation"/>
    <property type="evidence" value="ECO:0007669"/>
    <property type="project" value="InterPro"/>
</dbReference>
<dbReference type="FunFam" id="1.10.220.10:FF:000002">
    <property type="entry name" value="Annexin"/>
    <property type="match status" value="1"/>
</dbReference>
<dbReference type="FunFam" id="1.10.220.10:FF:000003">
    <property type="entry name" value="Annexin"/>
    <property type="match status" value="1"/>
</dbReference>
<dbReference type="FunFam" id="1.10.220.10:FF:000004">
    <property type="entry name" value="Annexin"/>
    <property type="match status" value="1"/>
</dbReference>
<dbReference type="FunFam" id="1.10.220.10:FF:000022">
    <property type="entry name" value="Annexin A5"/>
    <property type="match status" value="1"/>
</dbReference>
<dbReference type="Gene3D" id="1.10.220.10">
    <property type="entry name" value="Annexin"/>
    <property type="match status" value="4"/>
</dbReference>
<dbReference type="InterPro" id="IPR001464">
    <property type="entry name" value="Annexin"/>
</dbReference>
<dbReference type="InterPro" id="IPR018502">
    <property type="entry name" value="Annexin_repeat"/>
</dbReference>
<dbReference type="InterPro" id="IPR018252">
    <property type="entry name" value="Annexin_repeat_CS"/>
</dbReference>
<dbReference type="InterPro" id="IPR037104">
    <property type="entry name" value="Annexin_sf"/>
</dbReference>
<dbReference type="InterPro" id="IPR002392">
    <property type="entry name" value="ANX5"/>
</dbReference>
<dbReference type="PANTHER" id="PTHR10502">
    <property type="entry name" value="ANNEXIN"/>
    <property type="match status" value="1"/>
</dbReference>
<dbReference type="PANTHER" id="PTHR10502:SF26">
    <property type="entry name" value="ANNEXIN A5"/>
    <property type="match status" value="1"/>
</dbReference>
<dbReference type="Pfam" id="PF00191">
    <property type="entry name" value="Annexin"/>
    <property type="match status" value="4"/>
</dbReference>
<dbReference type="PRINTS" id="PR00196">
    <property type="entry name" value="ANNEXIN"/>
</dbReference>
<dbReference type="PRINTS" id="PR00201">
    <property type="entry name" value="ANNEXINV"/>
</dbReference>
<dbReference type="SMART" id="SM00335">
    <property type="entry name" value="ANX"/>
    <property type="match status" value="4"/>
</dbReference>
<dbReference type="SUPFAM" id="SSF47874">
    <property type="entry name" value="Annexin"/>
    <property type="match status" value="1"/>
</dbReference>
<dbReference type="PROSITE" id="PS00223">
    <property type="entry name" value="ANNEXIN_1"/>
    <property type="match status" value="4"/>
</dbReference>
<dbReference type="PROSITE" id="PS51897">
    <property type="entry name" value="ANNEXIN_2"/>
    <property type="match status" value="4"/>
</dbReference>